<evidence type="ECO:0000250" key="1"/>
<evidence type="ECO:0000250" key="2">
    <source>
        <dbReference type="UniProtKB" id="Q22993"/>
    </source>
</evidence>
<evidence type="ECO:0000250" key="3">
    <source>
        <dbReference type="UniProtKB" id="Q9FR44"/>
    </source>
</evidence>
<evidence type="ECO:0000255" key="4">
    <source>
        <dbReference type="PROSITE-ProRule" id="PRU00915"/>
    </source>
</evidence>
<evidence type="ECO:0000269" key="5">
    <source>
    </source>
</evidence>
<evidence type="ECO:0000269" key="6">
    <source>
    </source>
</evidence>
<evidence type="ECO:0000269" key="7">
    <source>
    </source>
</evidence>
<evidence type="ECO:0000303" key="8">
    <source>
    </source>
</evidence>
<evidence type="ECO:0000303" key="9">
    <source ref="3"/>
</evidence>
<evidence type="ECO:0000305" key="10"/>
<evidence type="ECO:0000312" key="11">
    <source>
        <dbReference type="Araport" id="AT1G73600"/>
    </source>
</evidence>
<evidence type="ECO:0000312" key="12">
    <source>
        <dbReference type="EMBL" id="AAG51806.1"/>
    </source>
</evidence>
<evidence type="ECO:0000312" key="13">
    <source>
        <dbReference type="EMBL" id="AAG52075.1"/>
    </source>
</evidence>
<feature type="chain" id="PRO_0000204428" description="Phosphoethanolamine N-methyltransferase 3">
    <location>
        <begin position="1"/>
        <end position="490"/>
    </location>
</feature>
<feature type="binding site" evidence="3">
    <location>
        <position position="60"/>
    </location>
    <ligand>
        <name>S-adenosyl-L-homocysteine</name>
        <dbReference type="ChEBI" id="CHEBI:57856"/>
    </ligand>
</feature>
<feature type="binding site" evidence="3">
    <location>
        <position position="65"/>
    </location>
    <ligand>
        <name>S-adenosyl-L-homocysteine</name>
        <dbReference type="ChEBI" id="CHEBI:57856"/>
    </ligand>
</feature>
<feature type="binding site" evidence="3">
    <location>
        <position position="81"/>
    </location>
    <ligand>
        <name>S-adenosyl-L-homocysteine</name>
        <dbReference type="ChEBI" id="CHEBI:57856"/>
    </ligand>
</feature>
<feature type="binding site" evidence="3">
    <location>
        <position position="106"/>
    </location>
    <ligand>
        <name>S-adenosyl-L-homocysteine</name>
        <dbReference type="ChEBI" id="CHEBI:57856"/>
    </ligand>
</feature>
<feature type="binding site" evidence="3">
    <location>
        <position position="107"/>
    </location>
    <ligand>
        <name>S-adenosyl-L-homocysteine</name>
        <dbReference type="ChEBI" id="CHEBI:57856"/>
    </ligand>
</feature>
<feature type="binding site" evidence="3">
    <location>
        <position position="125"/>
    </location>
    <ligand>
        <name>S-adenosyl-L-homocysteine</name>
        <dbReference type="ChEBI" id="CHEBI:57856"/>
    </ligand>
</feature>
<feature type="binding site" evidence="3">
    <location>
        <position position="158"/>
    </location>
    <ligand>
        <name>phosphocholine</name>
        <dbReference type="ChEBI" id="CHEBI:295975"/>
    </ligand>
</feature>
<feature type="binding site" evidence="3">
    <location>
        <position position="163"/>
    </location>
    <ligand>
        <name>phosphocholine</name>
        <dbReference type="ChEBI" id="CHEBI:295975"/>
    </ligand>
</feature>
<feature type="binding site" evidence="3">
    <location>
        <position position="164"/>
    </location>
    <ligand>
        <name>phosphocholine</name>
        <dbReference type="ChEBI" id="CHEBI:295975"/>
    </ligand>
</feature>
<feature type="binding site" evidence="3">
    <location>
        <position position="168"/>
    </location>
    <ligand>
        <name>phosphocholine</name>
        <dbReference type="ChEBI" id="CHEBI:295975"/>
    </ligand>
</feature>
<feature type="binding site" evidence="3">
    <location>
        <position position="175"/>
    </location>
    <ligand>
        <name>phosphocholine</name>
        <dbReference type="ChEBI" id="CHEBI:295975"/>
    </ligand>
</feature>
<feature type="binding site" evidence="2">
    <location>
        <begin position="244"/>
        <end position="245"/>
    </location>
    <ligand>
        <name>N-methylethanolamine phosphate</name>
        <dbReference type="ChEBI" id="CHEBI:57781"/>
    </ligand>
</feature>
<feature type="binding site" evidence="2">
    <location>
        <position position="253"/>
    </location>
    <ligand>
        <name>N-methylethanolamine phosphate</name>
        <dbReference type="ChEBI" id="CHEBI:57781"/>
    </ligand>
</feature>
<feature type="binding site" evidence="3">
    <location>
        <position position="253"/>
    </location>
    <ligand>
        <name>phosphocholine</name>
        <dbReference type="ChEBI" id="CHEBI:295975"/>
    </ligand>
</feature>
<feature type="binding site" evidence="3">
    <location>
        <position position="262"/>
    </location>
    <ligand>
        <name>S-adenosyl-L-homocysteine</name>
        <dbReference type="ChEBI" id="CHEBI:57856"/>
    </ligand>
</feature>
<feature type="binding site" evidence="3">
    <location>
        <position position="263"/>
    </location>
    <ligand>
        <name>S-adenosyl-L-homocysteine</name>
        <dbReference type="ChEBI" id="CHEBI:57856"/>
    </ligand>
</feature>
<feature type="binding site" evidence="3">
    <location>
        <position position="289"/>
    </location>
    <ligand>
        <name>S-adenosyl-L-homocysteine</name>
        <dbReference type="ChEBI" id="CHEBI:57856"/>
    </ligand>
</feature>
<feature type="binding site" evidence="3">
    <location>
        <position position="311"/>
    </location>
    <ligand>
        <name>S-adenosyl-L-homocysteine</name>
        <dbReference type="ChEBI" id="CHEBI:57856"/>
    </ligand>
</feature>
<feature type="binding site" evidence="3">
    <location>
        <position position="337"/>
    </location>
    <ligand>
        <name>S-adenosyl-L-homocysteine</name>
        <dbReference type="ChEBI" id="CHEBI:57856"/>
    </ligand>
</feature>
<feature type="binding site" evidence="3">
    <location>
        <position position="338"/>
    </location>
    <ligand>
        <name>S-adenosyl-L-homocysteine</name>
        <dbReference type="ChEBI" id="CHEBI:57856"/>
    </ligand>
</feature>
<feature type="binding site" evidence="2">
    <location>
        <position position="354"/>
    </location>
    <ligand>
        <name>S-adenosyl-L-homocysteine</name>
        <dbReference type="ChEBI" id="CHEBI:57856"/>
    </ligand>
</feature>
<feature type="binding site" evidence="2">
    <location>
        <position position="385"/>
    </location>
    <ligand>
        <name>N-methylethanolamine phosphate</name>
        <dbReference type="ChEBI" id="CHEBI:57781"/>
    </ligand>
</feature>
<feature type="binding site" evidence="3">
    <location>
        <position position="385"/>
    </location>
    <ligand>
        <name>phosphocholine</name>
        <dbReference type="ChEBI" id="CHEBI:295975"/>
    </ligand>
</feature>
<feature type="binding site" evidence="2">
    <location>
        <position position="399"/>
    </location>
    <ligand>
        <name>N-methylethanolamine phosphate</name>
        <dbReference type="ChEBI" id="CHEBI:57781"/>
    </ligand>
</feature>
<feature type="binding site" evidence="3">
    <location>
        <position position="399"/>
    </location>
    <ligand>
        <name>phosphocholine</name>
        <dbReference type="ChEBI" id="CHEBI:295975"/>
    </ligand>
</feature>
<feature type="binding site" evidence="2">
    <location>
        <begin position="403"/>
        <end position="405"/>
    </location>
    <ligand>
        <name>N-methylethanolamine phosphate</name>
        <dbReference type="ChEBI" id="CHEBI:57781"/>
    </ligand>
</feature>
<feature type="binding site" evidence="3">
    <location>
        <position position="403"/>
    </location>
    <ligand>
        <name>phosphocholine</name>
        <dbReference type="ChEBI" id="CHEBI:295975"/>
    </ligand>
</feature>
<feature type="binding site" evidence="3">
    <location>
        <position position="405"/>
    </location>
    <ligand>
        <name>phosphocholine</name>
        <dbReference type="ChEBI" id="CHEBI:295975"/>
    </ligand>
</feature>
<feature type="binding site" evidence="2">
    <location>
        <position position="471"/>
    </location>
    <ligand>
        <name>N-methylethanolamine phosphate</name>
        <dbReference type="ChEBI" id="CHEBI:57781"/>
    </ligand>
</feature>
<feature type="binding site" evidence="3">
    <location>
        <position position="471"/>
    </location>
    <ligand>
        <name>phosphocholine</name>
        <dbReference type="ChEBI" id="CHEBI:295975"/>
    </ligand>
</feature>
<feature type="splice variant" id="VSP_040637" description="In isoform 2." evidence="9">
    <original>MASYG</original>
    <variation>MAHSHTNGAISPSFSKDLC</variation>
    <location>
        <begin position="1"/>
        <end position="5"/>
    </location>
</feature>
<feature type="sequence conflict" description="In Ref. 3; BAE99185." evidence="10" ref="3">
    <original>V</original>
    <variation>A</variation>
    <location>
        <position position="56"/>
    </location>
</feature>
<feature type="sequence conflict" description="In Ref. 3; BAE99185." evidence="10" ref="3">
    <original>T</original>
    <variation>A</variation>
    <location>
        <position position="147"/>
    </location>
</feature>
<feature type="sequence conflict" description="In Ref. 3; BAE99185." evidence="10" ref="3">
    <original>T</original>
    <variation>A</variation>
    <location>
        <position position="383"/>
    </location>
</feature>
<sequence>MASYGEEREIQKNYWKEHSVGLSVEAMMLDSKASDLDKEERPEILAFLPPIEGTTVLEFGAGIGRFTTELAQKAGQVIAVDFIESVIKKNENINGHYKNVKFLCADVTSPNMNFPNESMDLIFSNWLLMYLSDQEVEDLAKKMLQWTKVGGYIFFRESCFHQSGDNKRKYNPTHYREPKFYTKLFKECHMNDEDGNSYELSLVSCKCIGAYVRNKKNQNQICWLWQKVSSDNDRGFQRFLDNVQYKSSGILRYERVFGEGFVSTGGLETTKEFVDMLDLKPGQKVLDVGCGIGGGDFYMAENFDVDVVGIDLSVNMISFALEHAIGLKCSVEFEVADCTKKEYPDNTFDVIYSRDTILHIQDKPALFRRFYKWLKPGGKVLITDYCRSPKTPSPDFAIYIKKRGYDLHDVQAYGQMLRDAGFEEVIAEDRTDQFMKVLKRELDAVEKEKEEFISDFSKEDYEDIIGGWKSKLLRSSSGEQKWGLFIAKRN</sequence>
<organism>
    <name type="scientific">Arabidopsis thaliana</name>
    <name type="common">Mouse-ear cress</name>
    <dbReference type="NCBI Taxonomy" id="3702"/>
    <lineage>
        <taxon>Eukaryota</taxon>
        <taxon>Viridiplantae</taxon>
        <taxon>Streptophyta</taxon>
        <taxon>Embryophyta</taxon>
        <taxon>Tracheophyta</taxon>
        <taxon>Spermatophyta</taxon>
        <taxon>Magnoliopsida</taxon>
        <taxon>eudicotyledons</taxon>
        <taxon>Gunneridae</taxon>
        <taxon>Pentapetalae</taxon>
        <taxon>rosids</taxon>
        <taxon>malvids</taxon>
        <taxon>Brassicales</taxon>
        <taxon>Brassicaceae</taxon>
        <taxon>Camelineae</taxon>
        <taxon>Arabidopsis</taxon>
    </lineage>
</organism>
<gene>
    <name evidence="8" type="primary">NMT3</name>
    <name evidence="11" type="ordered locus">At1g73600</name>
    <name evidence="13" type="ORF">F25P22.1</name>
    <name evidence="12" type="ORF">F6D5.1</name>
</gene>
<keyword id="KW-0025">Alternative splicing</keyword>
<keyword id="KW-0963">Cytoplasm</keyword>
<keyword id="KW-0444">Lipid biosynthesis</keyword>
<keyword id="KW-0443">Lipid metabolism</keyword>
<keyword id="KW-0489">Methyltransferase</keyword>
<keyword id="KW-0594">Phospholipid biosynthesis</keyword>
<keyword id="KW-1208">Phospholipid metabolism</keyword>
<keyword id="KW-1185">Reference proteome</keyword>
<keyword id="KW-0677">Repeat</keyword>
<keyword id="KW-0949">S-adenosyl-L-methionine</keyword>
<keyword id="KW-0808">Transferase</keyword>
<accession>Q9C6B9</accession>
<accession>Q0WUL3</accession>
<accession>Q9C9V1</accession>
<protein>
    <recommendedName>
        <fullName evidence="8">Phosphoethanolamine N-methyltransferase 3</fullName>
        <ecNumber evidence="5">2.1.1.103</ecNumber>
    </recommendedName>
</protein>
<dbReference type="EC" id="2.1.1.103" evidence="5"/>
<dbReference type="EMBL" id="AC012679">
    <property type="protein sequence ID" value="AAG52075.1"/>
    <property type="molecule type" value="Genomic_DNA"/>
</dbReference>
<dbReference type="EMBL" id="AC079676">
    <property type="protein sequence ID" value="AAG51806.1"/>
    <property type="status" value="ALT_SEQ"/>
    <property type="molecule type" value="Genomic_DNA"/>
</dbReference>
<dbReference type="EMBL" id="CP002684">
    <property type="protein sequence ID" value="AEE35480.1"/>
    <property type="molecule type" value="Genomic_DNA"/>
</dbReference>
<dbReference type="EMBL" id="CP002684">
    <property type="protein sequence ID" value="AEE35481.1"/>
    <property type="molecule type" value="Genomic_DNA"/>
</dbReference>
<dbReference type="EMBL" id="AK227139">
    <property type="protein sequence ID" value="BAE99185.1"/>
    <property type="molecule type" value="mRNA"/>
</dbReference>
<dbReference type="RefSeq" id="NP_177501.2">
    <molecule id="Q9C6B9-1"/>
    <property type="nucleotide sequence ID" value="NM_106018.4"/>
</dbReference>
<dbReference type="RefSeq" id="NP_974139.2">
    <molecule id="Q9C6B9-2"/>
    <property type="nucleotide sequence ID" value="NM_202410.2"/>
</dbReference>
<dbReference type="SMR" id="Q9C6B9"/>
<dbReference type="FunCoup" id="Q9C6B9">
    <property type="interactions" value="4"/>
</dbReference>
<dbReference type="STRING" id="3702.Q9C6B9"/>
<dbReference type="PaxDb" id="3702-AT1G73600.2"/>
<dbReference type="ProteomicsDB" id="236766">
    <molecule id="Q9C6B9-1"/>
</dbReference>
<dbReference type="EnsemblPlants" id="AT1G73600.1">
    <molecule id="Q9C6B9-1"/>
    <property type="protein sequence ID" value="AT1G73600.1"/>
    <property type="gene ID" value="AT1G73600"/>
</dbReference>
<dbReference type="EnsemblPlants" id="AT1G73600.2">
    <molecule id="Q9C6B9-2"/>
    <property type="protein sequence ID" value="AT1G73600.2"/>
    <property type="gene ID" value="AT1G73600"/>
</dbReference>
<dbReference type="GeneID" id="843694"/>
<dbReference type="Gramene" id="AT1G73600.1">
    <molecule id="Q9C6B9-1"/>
    <property type="protein sequence ID" value="AT1G73600.1"/>
    <property type="gene ID" value="AT1G73600"/>
</dbReference>
<dbReference type="Gramene" id="AT1G73600.2">
    <molecule id="Q9C6B9-2"/>
    <property type="protein sequence ID" value="AT1G73600.2"/>
    <property type="gene ID" value="AT1G73600"/>
</dbReference>
<dbReference type="KEGG" id="ath:AT1G73600"/>
<dbReference type="Araport" id="AT1G73600"/>
<dbReference type="TAIR" id="AT1G73600">
    <property type="gene designation" value="NMT3"/>
</dbReference>
<dbReference type="eggNOG" id="KOG1269">
    <property type="taxonomic scope" value="Eukaryota"/>
</dbReference>
<dbReference type="HOGENOM" id="CLU_029163_0_0_1"/>
<dbReference type="InParanoid" id="Q9C6B9"/>
<dbReference type="OMA" id="VGRMVKW"/>
<dbReference type="PhylomeDB" id="Q9C6B9"/>
<dbReference type="BioCyc" id="ARA:AT1G73600-MONOMER"/>
<dbReference type="BRENDA" id="2.1.1.103">
    <property type="organism ID" value="399"/>
</dbReference>
<dbReference type="UniPathway" id="UPA00753">
    <property type="reaction ID" value="UER00738"/>
</dbReference>
<dbReference type="CD-CODE" id="4299E36E">
    <property type="entry name" value="Nucleolus"/>
</dbReference>
<dbReference type="PRO" id="PR:Q9C6B9"/>
<dbReference type="Proteomes" id="UP000006548">
    <property type="component" value="Chromosome 1"/>
</dbReference>
<dbReference type="ExpressionAtlas" id="Q9C6B9">
    <property type="expression patterns" value="baseline and differential"/>
</dbReference>
<dbReference type="GO" id="GO:0005737">
    <property type="term" value="C:cytoplasm"/>
    <property type="evidence" value="ECO:0007669"/>
    <property type="project" value="UniProtKB-SubCell"/>
</dbReference>
<dbReference type="GO" id="GO:0000234">
    <property type="term" value="F:phosphoethanolamine N-methyltransferase activity"/>
    <property type="evidence" value="ECO:0000314"/>
    <property type="project" value="TAIR"/>
</dbReference>
<dbReference type="GO" id="GO:0006651">
    <property type="term" value="P:diacylglycerol biosynthetic process"/>
    <property type="evidence" value="ECO:0000315"/>
    <property type="project" value="TAIR"/>
</dbReference>
<dbReference type="GO" id="GO:0032259">
    <property type="term" value="P:methylation"/>
    <property type="evidence" value="ECO:0007669"/>
    <property type="project" value="UniProtKB-KW"/>
</dbReference>
<dbReference type="GO" id="GO:0006656">
    <property type="term" value="P:phosphatidylcholine biosynthetic process"/>
    <property type="evidence" value="ECO:0000314"/>
    <property type="project" value="TAIR"/>
</dbReference>
<dbReference type="GO" id="GO:0046337">
    <property type="term" value="P:phosphatidylethanolamine metabolic process"/>
    <property type="evidence" value="ECO:0000314"/>
    <property type="project" value="TAIR"/>
</dbReference>
<dbReference type="GO" id="GO:0009555">
    <property type="term" value="P:pollen development"/>
    <property type="evidence" value="ECO:0000316"/>
    <property type="project" value="TAIR"/>
</dbReference>
<dbReference type="GO" id="GO:0019432">
    <property type="term" value="P:triglyceride biosynthetic process"/>
    <property type="evidence" value="ECO:0000315"/>
    <property type="project" value="TAIR"/>
</dbReference>
<dbReference type="CDD" id="cd02440">
    <property type="entry name" value="AdoMet_MTases"/>
    <property type="match status" value="2"/>
</dbReference>
<dbReference type="FunFam" id="3.40.50.150:FF:000237">
    <property type="entry name" value="N-methyltransferase 1"/>
    <property type="match status" value="1"/>
</dbReference>
<dbReference type="Gene3D" id="3.40.50.150">
    <property type="entry name" value="Vaccinia Virus protein VP39"/>
    <property type="match status" value="2"/>
</dbReference>
<dbReference type="InterPro" id="IPR025714">
    <property type="entry name" value="Methyltranfer_dom"/>
</dbReference>
<dbReference type="InterPro" id="IPR041698">
    <property type="entry name" value="Methyltransf_25"/>
</dbReference>
<dbReference type="InterPro" id="IPR025771">
    <property type="entry name" value="Phosphoethanolamine_N-MeTrfase"/>
</dbReference>
<dbReference type="InterPro" id="IPR029063">
    <property type="entry name" value="SAM-dependent_MTases_sf"/>
</dbReference>
<dbReference type="PANTHER" id="PTHR44307">
    <property type="entry name" value="PHOSPHOETHANOLAMINE METHYLTRANSFERASE"/>
    <property type="match status" value="1"/>
</dbReference>
<dbReference type="PANTHER" id="PTHR44307:SF17">
    <property type="entry name" value="PHOSPHOETHANOLAMINE N-METHYLTRANSFERASE 3"/>
    <property type="match status" value="1"/>
</dbReference>
<dbReference type="Pfam" id="PF13649">
    <property type="entry name" value="Methyltransf_25"/>
    <property type="match status" value="1"/>
</dbReference>
<dbReference type="Pfam" id="PF13847">
    <property type="entry name" value="Methyltransf_31"/>
    <property type="match status" value="1"/>
</dbReference>
<dbReference type="SUPFAM" id="SSF53335">
    <property type="entry name" value="S-adenosyl-L-methionine-dependent methyltransferases"/>
    <property type="match status" value="2"/>
</dbReference>
<dbReference type="PROSITE" id="PS51582">
    <property type="entry name" value="SAM_PEAMT"/>
    <property type="match status" value="1"/>
</dbReference>
<name>PEAM3_ARATH</name>
<proteinExistence type="evidence at protein level"/>
<comment type="function">
    <text evidence="5 6">Involved in phosphocholine biosynthesis (PubMed:29777000). Catalyzes the N-methylation of phosphoethanolamine, phosphomonomethylethanolamine and phosphodimethylethanolamine, the three methylation steps required to convert phosphoethanolamine to phosphocholine (PC) (PubMed:29777000). In association with NMT1, regulates PC homeostasis, phase transition at the shoot apex, coordinated organ development, and fertility (PubMed:29777000). In associtation with NMT1, involved in phosphatidylcholine biosynthesis and vascular development (PubMed:30218542).</text>
</comment>
<comment type="catalytic activity">
    <reaction evidence="5">
        <text>phosphoethanolamine + S-adenosyl-L-methionine = N-methylethanolamine phosphate + S-adenosyl-L-homocysteine + H(+)</text>
        <dbReference type="Rhea" id="RHEA:20365"/>
        <dbReference type="ChEBI" id="CHEBI:15378"/>
        <dbReference type="ChEBI" id="CHEBI:57781"/>
        <dbReference type="ChEBI" id="CHEBI:57856"/>
        <dbReference type="ChEBI" id="CHEBI:58190"/>
        <dbReference type="ChEBI" id="CHEBI:59789"/>
        <dbReference type="EC" id="2.1.1.103"/>
    </reaction>
    <physiologicalReaction direction="left-to-right" evidence="5">
        <dbReference type="Rhea" id="RHEA:20366"/>
    </physiologicalReaction>
</comment>
<comment type="catalytic activity">
    <reaction evidence="5">
        <text>N-methylethanolamine phosphate + S-adenosyl-L-methionine = N,N-dimethylethanolamine phosphate + S-adenosyl-L-homocysteine + H(+)</text>
        <dbReference type="Rhea" id="RHEA:25321"/>
        <dbReference type="ChEBI" id="CHEBI:15378"/>
        <dbReference type="ChEBI" id="CHEBI:57781"/>
        <dbReference type="ChEBI" id="CHEBI:57856"/>
        <dbReference type="ChEBI" id="CHEBI:58641"/>
        <dbReference type="ChEBI" id="CHEBI:59789"/>
        <dbReference type="EC" id="2.1.1.103"/>
    </reaction>
    <physiologicalReaction direction="left-to-right" evidence="5">
        <dbReference type="Rhea" id="RHEA:25322"/>
    </physiologicalReaction>
</comment>
<comment type="catalytic activity">
    <reaction evidence="5">
        <text>N,N-dimethylethanolamine phosphate + S-adenosyl-L-methionine = phosphocholine + S-adenosyl-L-homocysteine + H(+)</text>
        <dbReference type="Rhea" id="RHEA:25325"/>
        <dbReference type="ChEBI" id="CHEBI:15378"/>
        <dbReference type="ChEBI" id="CHEBI:57856"/>
        <dbReference type="ChEBI" id="CHEBI:58641"/>
        <dbReference type="ChEBI" id="CHEBI:59789"/>
        <dbReference type="ChEBI" id="CHEBI:295975"/>
        <dbReference type="EC" id="2.1.1.103"/>
    </reaction>
    <physiologicalReaction direction="left-to-right" evidence="5">
        <dbReference type="Rhea" id="RHEA:25326"/>
    </physiologicalReaction>
</comment>
<comment type="pathway">
    <text evidence="10">Phospholipid metabolism; phosphatidylcholine biosynthesis; phosphocholine from phosphoethanolamine: step 1/1.</text>
</comment>
<comment type="subcellular location">
    <subcellularLocation>
        <location evidence="1">Cytoplasm</location>
    </subcellularLocation>
</comment>
<comment type="alternative products">
    <event type="alternative splicing"/>
    <isoform>
        <id>Q9C6B9-1</id>
        <name>1</name>
        <sequence type="displayed"/>
    </isoform>
    <isoform>
        <id>Q9C6B9-2</id>
        <name>2</name>
        <sequence type="described" ref="VSP_040637"/>
    </isoform>
</comment>
<comment type="tissue specificity">
    <text evidence="5 6">Expressed in root vasculature, shoots, rosettes leaves, cauline leaves, sepals, petals, anther filaments and ovules (PubMed:29777000). Highly expressed in leaf vasculature (PubMed:30218542).</text>
</comment>
<comment type="disruption phenotype">
    <text evidence="5 6 7">No visible phenotype under normal growth conditions (PubMed:29777000). The double mutant nmt1 and nmt3 exhibit severe compromised aerial growth and reproduction, extensive sterility, drastically reduced phosphocholine concentrations, and altered lipid profiles (PubMed:29777000, PubMed:30218542). The triple mutant nmt1, nmt2 and nmt3 is seedling lethal (PubMed:30518673).</text>
</comment>
<comment type="similarity">
    <text evidence="4">Belongs to the class I-like SAM-binding methyltransferase superfamily. PEAMT family.</text>
</comment>
<comment type="sequence caution" evidence="10">
    <conflict type="erroneous gene model prediction">
        <sequence resource="EMBL-CDS" id="AAG51806"/>
    </conflict>
</comment>
<reference key="1">
    <citation type="journal article" date="2000" name="Nature">
        <title>Sequence and analysis of chromosome 1 of the plant Arabidopsis thaliana.</title>
        <authorList>
            <person name="Theologis A."/>
            <person name="Ecker J.R."/>
            <person name="Palm C.J."/>
            <person name="Federspiel N.A."/>
            <person name="Kaul S."/>
            <person name="White O."/>
            <person name="Alonso J."/>
            <person name="Altafi H."/>
            <person name="Araujo R."/>
            <person name="Bowman C.L."/>
            <person name="Brooks S.Y."/>
            <person name="Buehler E."/>
            <person name="Chan A."/>
            <person name="Chao Q."/>
            <person name="Chen H."/>
            <person name="Cheuk R.F."/>
            <person name="Chin C.W."/>
            <person name="Chung M.K."/>
            <person name="Conn L."/>
            <person name="Conway A.B."/>
            <person name="Conway A.R."/>
            <person name="Creasy T.H."/>
            <person name="Dewar K."/>
            <person name="Dunn P."/>
            <person name="Etgu P."/>
            <person name="Feldblyum T.V."/>
            <person name="Feng J.-D."/>
            <person name="Fong B."/>
            <person name="Fujii C.Y."/>
            <person name="Gill J.E."/>
            <person name="Goldsmith A.D."/>
            <person name="Haas B."/>
            <person name="Hansen N.F."/>
            <person name="Hughes B."/>
            <person name="Huizar L."/>
            <person name="Hunter J.L."/>
            <person name="Jenkins J."/>
            <person name="Johnson-Hopson C."/>
            <person name="Khan S."/>
            <person name="Khaykin E."/>
            <person name="Kim C.J."/>
            <person name="Koo H.L."/>
            <person name="Kremenetskaia I."/>
            <person name="Kurtz D.B."/>
            <person name="Kwan A."/>
            <person name="Lam B."/>
            <person name="Langin-Hooper S."/>
            <person name="Lee A."/>
            <person name="Lee J.M."/>
            <person name="Lenz C.A."/>
            <person name="Li J.H."/>
            <person name="Li Y.-P."/>
            <person name="Lin X."/>
            <person name="Liu S.X."/>
            <person name="Liu Z.A."/>
            <person name="Luros J.S."/>
            <person name="Maiti R."/>
            <person name="Marziali A."/>
            <person name="Militscher J."/>
            <person name="Miranda M."/>
            <person name="Nguyen M."/>
            <person name="Nierman W.C."/>
            <person name="Osborne B.I."/>
            <person name="Pai G."/>
            <person name="Peterson J."/>
            <person name="Pham P.K."/>
            <person name="Rizzo M."/>
            <person name="Rooney T."/>
            <person name="Rowley D."/>
            <person name="Sakano H."/>
            <person name="Salzberg S.L."/>
            <person name="Schwartz J.R."/>
            <person name="Shinn P."/>
            <person name="Southwick A.M."/>
            <person name="Sun H."/>
            <person name="Tallon L.J."/>
            <person name="Tambunga G."/>
            <person name="Toriumi M.J."/>
            <person name="Town C.D."/>
            <person name="Utterback T."/>
            <person name="Van Aken S."/>
            <person name="Vaysberg M."/>
            <person name="Vysotskaia V.S."/>
            <person name="Walker M."/>
            <person name="Wu D."/>
            <person name="Yu G."/>
            <person name="Fraser C.M."/>
            <person name="Venter J.C."/>
            <person name="Davis R.W."/>
        </authorList>
    </citation>
    <scope>NUCLEOTIDE SEQUENCE [LARGE SCALE GENOMIC DNA]</scope>
    <source>
        <strain>cv. Columbia</strain>
    </source>
</reference>
<reference key="2">
    <citation type="journal article" date="2017" name="Plant J.">
        <title>Araport11: a complete reannotation of the Arabidopsis thaliana reference genome.</title>
        <authorList>
            <person name="Cheng C.Y."/>
            <person name="Krishnakumar V."/>
            <person name="Chan A.P."/>
            <person name="Thibaud-Nissen F."/>
            <person name="Schobel S."/>
            <person name="Town C.D."/>
        </authorList>
    </citation>
    <scope>GENOME REANNOTATION</scope>
    <source>
        <strain>cv. Columbia</strain>
    </source>
</reference>
<reference key="3">
    <citation type="submission" date="2006-07" db="EMBL/GenBank/DDBJ databases">
        <title>Large-scale analysis of RIKEN Arabidopsis full-length (RAFL) cDNAs.</title>
        <authorList>
            <person name="Totoki Y."/>
            <person name="Seki M."/>
            <person name="Ishida J."/>
            <person name="Nakajima M."/>
            <person name="Enju A."/>
            <person name="Kamiya A."/>
            <person name="Narusaka M."/>
            <person name="Shin-i T."/>
            <person name="Nakagawa M."/>
            <person name="Sakamoto N."/>
            <person name="Oishi K."/>
            <person name="Kohara Y."/>
            <person name="Kobayashi M."/>
            <person name="Toyoda A."/>
            <person name="Sakaki Y."/>
            <person name="Sakurai T."/>
            <person name="Iida K."/>
            <person name="Akiyama K."/>
            <person name="Satou M."/>
            <person name="Toyoda T."/>
            <person name="Konagaya A."/>
            <person name="Carninci P."/>
            <person name="Kawai J."/>
            <person name="Hayashizaki Y."/>
            <person name="Shinozaki K."/>
        </authorList>
    </citation>
    <scope>NUCLEOTIDE SEQUENCE [LARGE SCALE MRNA] (ISOFORM 2)</scope>
    <source>
        <strain>cv. Columbia</strain>
    </source>
</reference>
<reference key="4">
    <citation type="journal article" date="2018" name="Plant J.">
        <title>A pair of phospho-base methyltransferases important for phosphatidylcholine biosynthesis in Arabidopsis.</title>
        <authorList>
            <person name="Liu Y.C."/>
            <person name="Lin Y.C."/>
            <person name="Kanehara K."/>
            <person name="Nakamura Y."/>
        </authorList>
    </citation>
    <scope>FUNCTION</scope>
    <scope>TISSUE SPECIFICITY</scope>
    <scope>DISRUPTION PHENOTYPE</scope>
</reference>
<reference key="5">
    <citation type="journal article" date="2018" name="Plant Physiol.">
        <title>NMT1 and NMT3 N-methyltransferase activity is critical to lipid homeostasis, morphogenesis, and reproduction.</title>
        <authorList>
            <person name="Chen W."/>
            <person name="Salari H."/>
            <person name="Taylor M.C."/>
            <person name="Jost R."/>
            <person name="Berkowitz O."/>
            <person name="Barrow R."/>
            <person name="Qiu D."/>
            <person name="Branco R."/>
            <person name="Masle J."/>
        </authorList>
    </citation>
    <scope>FUNCTION</scope>
    <scope>CATALYTIC ACTIVITY</scope>
    <scope>TISSUE SPECIFICITY</scope>
    <scope>DISRUPTION PHENOTYPE</scope>
</reference>
<reference key="6">
    <citation type="journal article" date="2019" name="Plant Physiol.">
        <title>A methyltransferase trio essential for phosphatidylcholine biosynthesis and growth.</title>
        <authorList>
            <person name="Liu Y.C."/>
            <person name="Lin Y.C."/>
            <person name="Kanehara K."/>
            <person name="Nakamura Y."/>
        </authorList>
    </citation>
    <scope>DISRUPTION PHENOTYPE</scope>
</reference>